<organism>
    <name type="scientific">Halorubrum lacusprofundi (strain ATCC 49239 / DSM 5036 / JCM 8891 / ACAM 34)</name>
    <dbReference type="NCBI Taxonomy" id="416348"/>
    <lineage>
        <taxon>Archaea</taxon>
        <taxon>Methanobacteriati</taxon>
        <taxon>Methanobacteriota</taxon>
        <taxon>Stenosarchaea group</taxon>
        <taxon>Halobacteria</taxon>
        <taxon>Halobacteriales</taxon>
        <taxon>Haloferacaceae</taxon>
        <taxon>Halorubrum</taxon>
    </lineage>
</organism>
<protein>
    <recommendedName>
        <fullName evidence="1">DNA-directed RNA polymerase subunit Rpo11</fullName>
        <ecNumber evidence="1">2.7.7.6</ecNumber>
    </recommendedName>
    <alternativeName>
        <fullName evidence="1">DNA-directed RNA polymerase subunit L</fullName>
    </alternativeName>
</protein>
<sequence length="92" mass="9861">MELRVIEKTDTELRIEIAGEDHTFMNVLKGVLLETDDVAAATYDMNPEQSGGQTEPVLTVKSESGDPLDVLAEGAESITDRTGALRDAVKAA</sequence>
<accession>B9LTT8</accession>
<name>RPO11_HALLT</name>
<gene>
    <name evidence="1" type="primary">rpo11</name>
    <name evidence="1" type="synonym">rpoL</name>
    <name type="ordered locus">Hlac_0620</name>
</gene>
<comment type="function">
    <text evidence="1">DNA-dependent RNA polymerase (RNAP) catalyzes the transcription of DNA into RNA using the four ribonucleoside triphosphates as substrates.</text>
</comment>
<comment type="catalytic activity">
    <reaction evidence="1">
        <text>RNA(n) + a ribonucleoside 5'-triphosphate = RNA(n+1) + diphosphate</text>
        <dbReference type="Rhea" id="RHEA:21248"/>
        <dbReference type="Rhea" id="RHEA-COMP:14527"/>
        <dbReference type="Rhea" id="RHEA-COMP:17342"/>
        <dbReference type="ChEBI" id="CHEBI:33019"/>
        <dbReference type="ChEBI" id="CHEBI:61557"/>
        <dbReference type="ChEBI" id="CHEBI:140395"/>
        <dbReference type="EC" id="2.7.7.6"/>
    </reaction>
</comment>
<comment type="subunit">
    <text evidence="1">Part of the RNA polymerase complex.</text>
</comment>
<comment type="subcellular location">
    <subcellularLocation>
        <location evidence="1">Cytoplasm</location>
    </subcellularLocation>
</comment>
<comment type="similarity">
    <text evidence="1">Belongs to the archaeal Rpo11/eukaryotic RPB11/RPC19 RNA polymerase subunit family.</text>
</comment>
<feature type="chain" id="PRO_1000194740" description="DNA-directed RNA polymerase subunit Rpo11">
    <location>
        <begin position="1"/>
        <end position="92"/>
    </location>
</feature>
<dbReference type="EC" id="2.7.7.6" evidence="1"/>
<dbReference type="EMBL" id="CP001365">
    <property type="protein sequence ID" value="ACM56222.1"/>
    <property type="molecule type" value="Genomic_DNA"/>
</dbReference>
<dbReference type="RefSeq" id="WP_012659855.1">
    <property type="nucleotide sequence ID" value="NC_012029.1"/>
</dbReference>
<dbReference type="SMR" id="B9LTT8"/>
<dbReference type="GeneID" id="7401674"/>
<dbReference type="KEGG" id="hla:Hlac_0620"/>
<dbReference type="eggNOG" id="arCOG04111">
    <property type="taxonomic scope" value="Archaea"/>
</dbReference>
<dbReference type="HOGENOM" id="CLU_090381_5_0_2"/>
<dbReference type="Proteomes" id="UP000000740">
    <property type="component" value="Chromosome 1"/>
</dbReference>
<dbReference type="GO" id="GO:0005737">
    <property type="term" value="C:cytoplasm"/>
    <property type="evidence" value="ECO:0007669"/>
    <property type="project" value="UniProtKB-SubCell"/>
</dbReference>
<dbReference type="GO" id="GO:0000428">
    <property type="term" value="C:DNA-directed RNA polymerase complex"/>
    <property type="evidence" value="ECO:0007669"/>
    <property type="project" value="UniProtKB-KW"/>
</dbReference>
<dbReference type="GO" id="GO:0003677">
    <property type="term" value="F:DNA binding"/>
    <property type="evidence" value="ECO:0007669"/>
    <property type="project" value="InterPro"/>
</dbReference>
<dbReference type="GO" id="GO:0003899">
    <property type="term" value="F:DNA-directed RNA polymerase activity"/>
    <property type="evidence" value="ECO:0007669"/>
    <property type="project" value="UniProtKB-UniRule"/>
</dbReference>
<dbReference type="GO" id="GO:0046983">
    <property type="term" value="F:protein dimerization activity"/>
    <property type="evidence" value="ECO:0007669"/>
    <property type="project" value="InterPro"/>
</dbReference>
<dbReference type="GO" id="GO:0006351">
    <property type="term" value="P:DNA-templated transcription"/>
    <property type="evidence" value="ECO:0007669"/>
    <property type="project" value="UniProtKB-UniRule"/>
</dbReference>
<dbReference type="CDD" id="cd06927">
    <property type="entry name" value="RNAP_L"/>
    <property type="match status" value="1"/>
</dbReference>
<dbReference type="Gene3D" id="3.30.1360.10">
    <property type="entry name" value="RNA polymerase, RBP11-like subunit"/>
    <property type="match status" value="1"/>
</dbReference>
<dbReference type="HAMAP" id="MF_00261">
    <property type="entry name" value="RNApol_arch_Rpo11"/>
    <property type="match status" value="1"/>
</dbReference>
<dbReference type="InterPro" id="IPR036603">
    <property type="entry name" value="RBP11-like"/>
</dbReference>
<dbReference type="InterPro" id="IPR009025">
    <property type="entry name" value="RBP11-like_dimer"/>
</dbReference>
<dbReference type="InterPro" id="IPR008193">
    <property type="entry name" value="RNA_pol_Rpb11_13-16kDa_CS"/>
</dbReference>
<dbReference type="InterPro" id="IPR022905">
    <property type="entry name" value="Rpo11-like"/>
</dbReference>
<dbReference type="NCBIfam" id="NF002236">
    <property type="entry name" value="PRK01146.1-5"/>
    <property type="match status" value="1"/>
</dbReference>
<dbReference type="Pfam" id="PF13656">
    <property type="entry name" value="RNA_pol_L_2"/>
    <property type="match status" value="1"/>
</dbReference>
<dbReference type="SUPFAM" id="SSF55257">
    <property type="entry name" value="RBP11-like subunits of RNA polymerase"/>
    <property type="match status" value="1"/>
</dbReference>
<dbReference type="PROSITE" id="PS01154">
    <property type="entry name" value="RNA_POL_L_13KD"/>
    <property type="match status" value="1"/>
</dbReference>
<reference key="1">
    <citation type="journal article" date="2016" name="Stand. Genomic Sci.">
        <title>Complete genome sequence of the Antarctic Halorubrum lacusprofundi type strain ACAM 34.</title>
        <authorList>
            <person name="Anderson I.J."/>
            <person name="DasSarma P."/>
            <person name="Lucas S."/>
            <person name="Copeland A."/>
            <person name="Lapidus A."/>
            <person name="Del Rio T.G."/>
            <person name="Tice H."/>
            <person name="Dalin E."/>
            <person name="Bruce D.C."/>
            <person name="Goodwin L."/>
            <person name="Pitluck S."/>
            <person name="Sims D."/>
            <person name="Brettin T.S."/>
            <person name="Detter J.C."/>
            <person name="Han C.S."/>
            <person name="Larimer F."/>
            <person name="Hauser L."/>
            <person name="Land M."/>
            <person name="Ivanova N."/>
            <person name="Richardson P."/>
            <person name="Cavicchioli R."/>
            <person name="DasSarma S."/>
            <person name="Woese C.R."/>
            <person name="Kyrpides N.C."/>
        </authorList>
    </citation>
    <scope>NUCLEOTIDE SEQUENCE [LARGE SCALE GENOMIC DNA]</scope>
    <source>
        <strain>ATCC 49239 / DSM 5036 / JCM 8891 / ACAM 34</strain>
    </source>
</reference>
<proteinExistence type="inferred from homology"/>
<evidence type="ECO:0000255" key="1">
    <source>
        <dbReference type="HAMAP-Rule" id="MF_00261"/>
    </source>
</evidence>
<keyword id="KW-0963">Cytoplasm</keyword>
<keyword id="KW-0240">DNA-directed RNA polymerase</keyword>
<keyword id="KW-0548">Nucleotidyltransferase</keyword>
<keyword id="KW-1185">Reference proteome</keyword>
<keyword id="KW-0804">Transcription</keyword>
<keyword id="KW-0808">Transferase</keyword>